<evidence type="ECO:0000255" key="1">
    <source>
        <dbReference type="HAMAP-Rule" id="MF_00268"/>
    </source>
</evidence>
<evidence type="ECO:0000256" key="2">
    <source>
        <dbReference type="SAM" id="MobiDB-lite"/>
    </source>
</evidence>
<organism>
    <name type="scientific">Staphylococcus aureus (strain USA300 / TCH1516)</name>
    <dbReference type="NCBI Taxonomy" id="451516"/>
    <lineage>
        <taxon>Bacteria</taxon>
        <taxon>Bacillati</taxon>
        <taxon>Bacillota</taxon>
        <taxon>Bacilli</taxon>
        <taxon>Bacillales</taxon>
        <taxon>Staphylococcaceae</taxon>
        <taxon>Staphylococcus</taxon>
    </lineage>
</organism>
<feature type="chain" id="PRO_1000078686" description="Protein RecA">
    <location>
        <begin position="1"/>
        <end position="347"/>
    </location>
</feature>
<feature type="region of interest" description="Disordered" evidence="2">
    <location>
        <begin position="325"/>
        <end position="347"/>
    </location>
</feature>
<feature type="compositionally biased region" description="Basic and acidic residues" evidence="2">
    <location>
        <begin position="338"/>
        <end position="347"/>
    </location>
</feature>
<feature type="binding site" evidence="1">
    <location>
        <begin position="65"/>
        <end position="72"/>
    </location>
    <ligand>
        <name>ATP</name>
        <dbReference type="ChEBI" id="CHEBI:30616"/>
    </ligand>
</feature>
<proteinExistence type="inferred from homology"/>
<accession>A8Z1V6</accession>
<protein>
    <recommendedName>
        <fullName evidence="1">Protein RecA</fullName>
    </recommendedName>
    <alternativeName>
        <fullName evidence="1">Recombinase A</fullName>
    </alternativeName>
</protein>
<dbReference type="EMBL" id="CP000730">
    <property type="protein sequence ID" value="ABX29231.1"/>
    <property type="molecule type" value="Genomic_DNA"/>
</dbReference>
<dbReference type="RefSeq" id="WP_000368166.1">
    <property type="nucleotide sequence ID" value="NC_010079.1"/>
</dbReference>
<dbReference type="SMR" id="A8Z1V6"/>
<dbReference type="KEGG" id="sax:USA300HOU_1217"/>
<dbReference type="HOGENOM" id="CLU_040469_1_2_9"/>
<dbReference type="GO" id="GO:0005829">
    <property type="term" value="C:cytosol"/>
    <property type="evidence" value="ECO:0007669"/>
    <property type="project" value="TreeGrafter"/>
</dbReference>
<dbReference type="GO" id="GO:0005524">
    <property type="term" value="F:ATP binding"/>
    <property type="evidence" value="ECO:0007669"/>
    <property type="project" value="UniProtKB-UniRule"/>
</dbReference>
<dbReference type="GO" id="GO:0016887">
    <property type="term" value="F:ATP hydrolysis activity"/>
    <property type="evidence" value="ECO:0007669"/>
    <property type="project" value="InterPro"/>
</dbReference>
<dbReference type="GO" id="GO:0140664">
    <property type="term" value="F:ATP-dependent DNA damage sensor activity"/>
    <property type="evidence" value="ECO:0007669"/>
    <property type="project" value="InterPro"/>
</dbReference>
<dbReference type="GO" id="GO:0003684">
    <property type="term" value="F:damaged DNA binding"/>
    <property type="evidence" value="ECO:0007669"/>
    <property type="project" value="UniProtKB-UniRule"/>
</dbReference>
<dbReference type="GO" id="GO:0003697">
    <property type="term" value="F:single-stranded DNA binding"/>
    <property type="evidence" value="ECO:0007669"/>
    <property type="project" value="UniProtKB-UniRule"/>
</dbReference>
<dbReference type="GO" id="GO:0006310">
    <property type="term" value="P:DNA recombination"/>
    <property type="evidence" value="ECO:0007669"/>
    <property type="project" value="UniProtKB-UniRule"/>
</dbReference>
<dbReference type="GO" id="GO:0006281">
    <property type="term" value="P:DNA repair"/>
    <property type="evidence" value="ECO:0007669"/>
    <property type="project" value="UniProtKB-UniRule"/>
</dbReference>
<dbReference type="GO" id="GO:0009432">
    <property type="term" value="P:SOS response"/>
    <property type="evidence" value="ECO:0007669"/>
    <property type="project" value="UniProtKB-UniRule"/>
</dbReference>
<dbReference type="CDD" id="cd00983">
    <property type="entry name" value="RecA"/>
    <property type="match status" value="1"/>
</dbReference>
<dbReference type="FunFam" id="3.40.50.300:FF:000087">
    <property type="entry name" value="Recombinase RecA"/>
    <property type="match status" value="1"/>
</dbReference>
<dbReference type="Gene3D" id="3.40.50.300">
    <property type="entry name" value="P-loop containing nucleotide triphosphate hydrolases"/>
    <property type="match status" value="1"/>
</dbReference>
<dbReference type="HAMAP" id="MF_00268">
    <property type="entry name" value="RecA"/>
    <property type="match status" value="1"/>
</dbReference>
<dbReference type="InterPro" id="IPR003593">
    <property type="entry name" value="AAA+_ATPase"/>
</dbReference>
<dbReference type="InterPro" id="IPR013765">
    <property type="entry name" value="DNA_recomb/repair_RecA"/>
</dbReference>
<dbReference type="InterPro" id="IPR020584">
    <property type="entry name" value="DNA_recomb/repair_RecA_CS"/>
</dbReference>
<dbReference type="InterPro" id="IPR027417">
    <property type="entry name" value="P-loop_NTPase"/>
</dbReference>
<dbReference type="InterPro" id="IPR049261">
    <property type="entry name" value="RecA-like_C"/>
</dbReference>
<dbReference type="InterPro" id="IPR049428">
    <property type="entry name" value="RecA-like_N"/>
</dbReference>
<dbReference type="InterPro" id="IPR020588">
    <property type="entry name" value="RecA_ATP-bd"/>
</dbReference>
<dbReference type="InterPro" id="IPR023400">
    <property type="entry name" value="RecA_C_sf"/>
</dbReference>
<dbReference type="InterPro" id="IPR020587">
    <property type="entry name" value="RecA_monomer-monomer_interface"/>
</dbReference>
<dbReference type="NCBIfam" id="TIGR02012">
    <property type="entry name" value="tigrfam_recA"/>
    <property type="match status" value="1"/>
</dbReference>
<dbReference type="PANTHER" id="PTHR45900:SF1">
    <property type="entry name" value="MITOCHONDRIAL DNA REPAIR PROTEIN RECA HOMOLOG-RELATED"/>
    <property type="match status" value="1"/>
</dbReference>
<dbReference type="PANTHER" id="PTHR45900">
    <property type="entry name" value="RECA"/>
    <property type="match status" value="1"/>
</dbReference>
<dbReference type="Pfam" id="PF00154">
    <property type="entry name" value="RecA"/>
    <property type="match status" value="1"/>
</dbReference>
<dbReference type="Pfam" id="PF21096">
    <property type="entry name" value="RecA_C"/>
    <property type="match status" value="1"/>
</dbReference>
<dbReference type="PRINTS" id="PR00142">
    <property type="entry name" value="RECA"/>
</dbReference>
<dbReference type="SMART" id="SM00382">
    <property type="entry name" value="AAA"/>
    <property type="match status" value="1"/>
</dbReference>
<dbReference type="SUPFAM" id="SSF52540">
    <property type="entry name" value="P-loop containing nucleoside triphosphate hydrolases"/>
    <property type="match status" value="1"/>
</dbReference>
<dbReference type="SUPFAM" id="SSF54752">
    <property type="entry name" value="RecA protein, C-terminal domain"/>
    <property type="match status" value="1"/>
</dbReference>
<dbReference type="PROSITE" id="PS00321">
    <property type="entry name" value="RECA_1"/>
    <property type="match status" value="1"/>
</dbReference>
<dbReference type="PROSITE" id="PS50162">
    <property type="entry name" value="RECA_2"/>
    <property type="match status" value="1"/>
</dbReference>
<dbReference type="PROSITE" id="PS50163">
    <property type="entry name" value="RECA_3"/>
    <property type="match status" value="1"/>
</dbReference>
<gene>
    <name evidence="1" type="primary">recA</name>
    <name type="ordered locus">USA300HOU_1217</name>
</gene>
<reference key="1">
    <citation type="journal article" date="2007" name="BMC Microbiol.">
        <title>Subtle genetic changes enhance virulence of methicillin resistant and sensitive Staphylococcus aureus.</title>
        <authorList>
            <person name="Highlander S.K."/>
            <person name="Hulten K.G."/>
            <person name="Qin X."/>
            <person name="Jiang H."/>
            <person name="Yerrapragada S."/>
            <person name="Mason E.O. Jr."/>
            <person name="Shang Y."/>
            <person name="Williams T.M."/>
            <person name="Fortunov R.M."/>
            <person name="Liu Y."/>
            <person name="Igboeli O."/>
            <person name="Petrosino J."/>
            <person name="Tirumalai M."/>
            <person name="Uzman A."/>
            <person name="Fox G.E."/>
            <person name="Cardenas A.M."/>
            <person name="Muzny D.M."/>
            <person name="Hemphill L."/>
            <person name="Ding Y."/>
            <person name="Dugan S."/>
            <person name="Blyth P.R."/>
            <person name="Buhay C.J."/>
            <person name="Dinh H.H."/>
            <person name="Hawes A.C."/>
            <person name="Holder M."/>
            <person name="Kovar C.L."/>
            <person name="Lee S.L."/>
            <person name="Liu W."/>
            <person name="Nazareth L.V."/>
            <person name="Wang Q."/>
            <person name="Zhou J."/>
            <person name="Kaplan S.L."/>
            <person name="Weinstock G.M."/>
        </authorList>
    </citation>
    <scope>NUCLEOTIDE SEQUENCE [LARGE SCALE GENOMIC DNA]</scope>
    <source>
        <strain>USA300 / TCH1516</strain>
    </source>
</reference>
<keyword id="KW-0067">ATP-binding</keyword>
<keyword id="KW-0963">Cytoplasm</keyword>
<keyword id="KW-0227">DNA damage</keyword>
<keyword id="KW-0233">DNA recombination</keyword>
<keyword id="KW-0234">DNA repair</keyword>
<keyword id="KW-0238">DNA-binding</keyword>
<keyword id="KW-0547">Nucleotide-binding</keyword>
<keyword id="KW-0742">SOS response</keyword>
<comment type="function">
    <text evidence="1">Can catalyze the hydrolysis of ATP in the presence of single-stranded DNA, the ATP-dependent uptake of single-stranded DNA by duplex DNA, and the ATP-dependent hybridization of homologous single-stranded DNAs. It interacts with LexA causing its activation and leading to its autocatalytic cleavage.</text>
</comment>
<comment type="subcellular location">
    <subcellularLocation>
        <location evidence="1">Cytoplasm</location>
    </subcellularLocation>
</comment>
<comment type="similarity">
    <text evidence="1">Belongs to the RecA family.</text>
</comment>
<sequence>MDNDRQKALDTVIKNMEKSFGKGAVMKLGDNIGRRVSTTSTGSVTLDNALGVGGYPKGRIIEIYGPESSGKTTVALHAIAEVQSNGGVAAFIDAEHALDPEYAQALGVDIDNLYLSQPDHGEQGLEIAEAFVRSGAVDIVVVDSVAALTPKAEIEGEMGDTHVGLQARLMSQALRKLSGAISKSNTTAIFINQIREKVGVMFGNPETTPGGRALKFYSSVRLEVRRAEQLKQGQEIVGNRTKIKVVKNKVAPPFRVAEVDIMYGQGISKEGELIDLGVENDIVDKSGAWYSYNGERMGQGKENVKMYLKENPQIKEEIDRKLREKLGISDGDVEETEDAPKSLFDEE</sequence>
<name>RECA_STAAT</name>